<dbReference type="EMBL" id="CP000423">
    <property type="protein sequence ID" value="ABJ69984.1"/>
    <property type="molecule type" value="Genomic_DNA"/>
</dbReference>
<dbReference type="RefSeq" id="WP_003594296.1">
    <property type="nucleotide sequence ID" value="NC_008526.1"/>
</dbReference>
<dbReference type="RefSeq" id="YP_806426.1">
    <property type="nucleotide sequence ID" value="NC_008526.1"/>
</dbReference>
<dbReference type="SMR" id="Q039Y8"/>
<dbReference type="STRING" id="321967.LSEI_1198"/>
<dbReference type="PaxDb" id="321967-LSEI_1198"/>
<dbReference type="KEGG" id="lca:LSEI_1198"/>
<dbReference type="PATRIC" id="fig|321967.11.peg.1173"/>
<dbReference type="HOGENOM" id="CLU_096059_0_0_9"/>
<dbReference type="Proteomes" id="UP000001651">
    <property type="component" value="Chromosome"/>
</dbReference>
<dbReference type="Gene3D" id="3.30.930.20">
    <property type="entry name" value="Protein of unknown function DUF1054"/>
    <property type="match status" value="1"/>
</dbReference>
<dbReference type="HAMAP" id="MF_01851">
    <property type="entry name" value="UPF0637"/>
    <property type="match status" value="1"/>
</dbReference>
<dbReference type="InterPro" id="IPR009403">
    <property type="entry name" value="UPF0637"/>
</dbReference>
<dbReference type="InterPro" id="IPR053707">
    <property type="entry name" value="UPF0637_domain_sf"/>
</dbReference>
<dbReference type="Pfam" id="PF06335">
    <property type="entry name" value="DUF1054"/>
    <property type="match status" value="1"/>
</dbReference>
<dbReference type="SUPFAM" id="SSF142913">
    <property type="entry name" value="YktB/PF0168-like"/>
    <property type="match status" value="1"/>
</dbReference>
<gene>
    <name type="ordered locus">LSEI_1198</name>
</gene>
<feature type="chain" id="PRO_0000348305" description="UPF0637 protein LSEI_1198">
    <location>
        <begin position="1"/>
        <end position="201"/>
    </location>
</feature>
<reference key="1">
    <citation type="journal article" date="2006" name="Proc. Natl. Acad. Sci. U.S.A.">
        <title>Comparative genomics of the lactic acid bacteria.</title>
        <authorList>
            <person name="Makarova K.S."/>
            <person name="Slesarev A."/>
            <person name="Wolf Y.I."/>
            <person name="Sorokin A."/>
            <person name="Mirkin B."/>
            <person name="Koonin E.V."/>
            <person name="Pavlov A."/>
            <person name="Pavlova N."/>
            <person name="Karamychev V."/>
            <person name="Polouchine N."/>
            <person name="Shakhova V."/>
            <person name="Grigoriev I."/>
            <person name="Lou Y."/>
            <person name="Rohksar D."/>
            <person name="Lucas S."/>
            <person name="Huang K."/>
            <person name="Goodstein D.M."/>
            <person name="Hawkins T."/>
            <person name="Plengvidhya V."/>
            <person name="Welker D."/>
            <person name="Hughes J."/>
            <person name="Goh Y."/>
            <person name="Benson A."/>
            <person name="Baldwin K."/>
            <person name="Lee J.-H."/>
            <person name="Diaz-Muniz I."/>
            <person name="Dosti B."/>
            <person name="Smeianov V."/>
            <person name="Wechter W."/>
            <person name="Barabote R."/>
            <person name="Lorca G."/>
            <person name="Altermann E."/>
            <person name="Barrangou R."/>
            <person name="Ganesan B."/>
            <person name="Xie Y."/>
            <person name="Rawsthorne H."/>
            <person name="Tamir D."/>
            <person name="Parker C."/>
            <person name="Breidt F."/>
            <person name="Broadbent J.R."/>
            <person name="Hutkins R."/>
            <person name="O'Sullivan D."/>
            <person name="Steele J."/>
            <person name="Unlu G."/>
            <person name="Saier M.H. Jr."/>
            <person name="Klaenhammer T."/>
            <person name="Richardson P."/>
            <person name="Kozyavkin S."/>
            <person name="Weimer B.C."/>
            <person name="Mills D.A."/>
        </authorList>
    </citation>
    <scope>NUCLEOTIDE SEQUENCE [LARGE SCALE GENOMIC DNA]</scope>
    <source>
        <strain>ATCC 334 / BCRC 17002 / CCUG 31169 / CIP 107868 / KCTC 3260 / NRRL B-441</strain>
    </source>
</reference>
<name>Y1198_LACP3</name>
<evidence type="ECO:0000255" key="1">
    <source>
        <dbReference type="HAMAP-Rule" id="MF_01851"/>
    </source>
</evidence>
<organism>
    <name type="scientific">Lacticaseibacillus paracasei (strain ATCC 334 / BCRC 17002 / CCUG 31169 / CIP 107868 / KCTC 3260 / NRRL B-441)</name>
    <name type="common">Lactobacillus paracasei</name>
    <dbReference type="NCBI Taxonomy" id="321967"/>
    <lineage>
        <taxon>Bacteria</taxon>
        <taxon>Bacillati</taxon>
        <taxon>Bacillota</taxon>
        <taxon>Bacilli</taxon>
        <taxon>Lactobacillales</taxon>
        <taxon>Lactobacillaceae</taxon>
        <taxon>Lacticaseibacillus</taxon>
    </lineage>
</organism>
<accession>Q039Y8</accession>
<proteinExistence type="inferred from homology"/>
<sequence length="201" mass="22830">MVLFTLEDFAVFKATTLATRMHLIREQLDPKFAEAATVIVPLLQTDQQQAIYSHIAKHQRRYRNPPPNTWVAFSTSSRGYKMVPHLALGFWDDRLFLWLSVLRESKPASRVLTGITAMATTLPGKWQVAGEHTDKAMLPLTSANLATVGARFQTIKKAEFLLGKVYLADDPIWADPVRLWQDIQQRVVALKPMFDQLVQNV</sequence>
<protein>
    <recommendedName>
        <fullName evidence="1">UPF0637 protein LSEI_1198</fullName>
    </recommendedName>
</protein>
<comment type="similarity">
    <text evidence="1">Belongs to the UPF0637 family.</text>
</comment>
<keyword id="KW-1185">Reference proteome</keyword>